<accession>Q5LST9</accession>
<proteinExistence type="inferred from homology"/>
<feature type="chain" id="PRO_1000009577" description="tRNA-specific 2-thiouridylase MnmA">
    <location>
        <begin position="1"/>
        <end position="375"/>
    </location>
</feature>
<feature type="region of interest" description="Interaction with tRNA" evidence="1">
    <location>
        <begin position="160"/>
        <end position="162"/>
    </location>
</feature>
<feature type="active site" description="Nucleophile" evidence="1">
    <location>
        <position position="114"/>
    </location>
</feature>
<feature type="active site" description="Cysteine persulfide intermediate" evidence="1">
    <location>
        <position position="211"/>
    </location>
</feature>
<feature type="binding site" evidence="1">
    <location>
        <begin position="20"/>
        <end position="27"/>
    </location>
    <ligand>
        <name>ATP</name>
        <dbReference type="ChEBI" id="CHEBI:30616"/>
    </ligand>
</feature>
<feature type="binding site" evidence="1">
    <location>
        <position position="46"/>
    </location>
    <ligand>
        <name>ATP</name>
        <dbReference type="ChEBI" id="CHEBI:30616"/>
    </ligand>
</feature>
<feature type="binding site" evidence="1">
    <location>
        <position position="138"/>
    </location>
    <ligand>
        <name>ATP</name>
        <dbReference type="ChEBI" id="CHEBI:30616"/>
    </ligand>
</feature>
<feature type="site" description="Interaction with tRNA" evidence="1">
    <location>
        <position position="139"/>
    </location>
</feature>
<feature type="site" description="Interaction with tRNA" evidence="1">
    <location>
        <position position="353"/>
    </location>
</feature>
<feature type="disulfide bond" description="Alternate" evidence="1">
    <location>
        <begin position="114"/>
        <end position="211"/>
    </location>
</feature>
<comment type="function">
    <text evidence="1">Catalyzes the 2-thiolation of uridine at the wobble position (U34) of tRNA, leading to the formation of s(2)U34.</text>
</comment>
<comment type="catalytic activity">
    <reaction evidence="1">
        <text>S-sulfanyl-L-cysteinyl-[protein] + uridine(34) in tRNA + AH2 + ATP = 2-thiouridine(34) in tRNA + L-cysteinyl-[protein] + A + AMP + diphosphate + H(+)</text>
        <dbReference type="Rhea" id="RHEA:47032"/>
        <dbReference type="Rhea" id="RHEA-COMP:10131"/>
        <dbReference type="Rhea" id="RHEA-COMP:11726"/>
        <dbReference type="Rhea" id="RHEA-COMP:11727"/>
        <dbReference type="Rhea" id="RHEA-COMP:11728"/>
        <dbReference type="ChEBI" id="CHEBI:13193"/>
        <dbReference type="ChEBI" id="CHEBI:15378"/>
        <dbReference type="ChEBI" id="CHEBI:17499"/>
        <dbReference type="ChEBI" id="CHEBI:29950"/>
        <dbReference type="ChEBI" id="CHEBI:30616"/>
        <dbReference type="ChEBI" id="CHEBI:33019"/>
        <dbReference type="ChEBI" id="CHEBI:61963"/>
        <dbReference type="ChEBI" id="CHEBI:65315"/>
        <dbReference type="ChEBI" id="CHEBI:87170"/>
        <dbReference type="ChEBI" id="CHEBI:456215"/>
        <dbReference type="EC" id="2.8.1.13"/>
    </reaction>
</comment>
<comment type="subcellular location">
    <subcellularLocation>
        <location evidence="1">Cytoplasm</location>
    </subcellularLocation>
</comment>
<comment type="similarity">
    <text evidence="1">Belongs to the MnmA/TRMU family.</text>
</comment>
<evidence type="ECO:0000255" key="1">
    <source>
        <dbReference type="HAMAP-Rule" id="MF_00144"/>
    </source>
</evidence>
<reference key="1">
    <citation type="journal article" date="2004" name="Nature">
        <title>Genome sequence of Silicibacter pomeroyi reveals adaptations to the marine environment.</title>
        <authorList>
            <person name="Moran M.A."/>
            <person name="Buchan A."/>
            <person name="Gonzalez J.M."/>
            <person name="Heidelberg J.F."/>
            <person name="Whitman W.B."/>
            <person name="Kiene R.P."/>
            <person name="Henriksen J.R."/>
            <person name="King G.M."/>
            <person name="Belas R."/>
            <person name="Fuqua C."/>
            <person name="Brinkac L.M."/>
            <person name="Lewis M."/>
            <person name="Johri S."/>
            <person name="Weaver B."/>
            <person name="Pai G."/>
            <person name="Eisen J.A."/>
            <person name="Rahe E."/>
            <person name="Sheldon W.M."/>
            <person name="Ye W."/>
            <person name="Miller T.R."/>
            <person name="Carlton J."/>
            <person name="Rasko D.A."/>
            <person name="Paulsen I.T."/>
            <person name="Ren Q."/>
            <person name="Daugherty S.C."/>
            <person name="DeBoy R.T."/>
            <person name="Dodson R.J."/>
            <person name="Durkin A.S."/>
            <person name="Madupu R."/>
            <person name="Nelson W.C."/>
            <person name="Sullivan S.A."/>
            <person name="Rosovitz M.J."/>
            <person name="Haft D.H."/>
            <person name="Selengut J."/>
            <person name="Ward N."/>
        </authorList>
    </citation>
    <scope>NUCLEOTIDE SEQUENCE [LARGE SCALE GENOMIC DNA]</scope>
    <source>
        <strain>ATCC 700808 / DSM 15171 / DSS-3</strain>
    </source>
</reference>
<reference key="2">
    <citation type="journal article" date="2014" name="Stand. Genomic Sci.">
        <title>An updated genome annotation for the model marine bacterium Ruegeria pomeroyi DSS-3.</title>
        <authorList>
            <person name="Rivers A.R."/>
            <person name="Smith C.B."/>
            <person name="Moran M.A."/>
        </authorList>
    </citation>
    <scope>GENOME REANNOTATION</scope>
    <source>
        <strain>ATCC 700808 / DSM 15171 / DSS-3</strain>
    </source>
</reference>
<sequence length="375" mass="41116">MPLNSLGFAKPPSETRVVVAMSGGVDSSVVAAYLADQGYDVVGVTLQLYDHGAALAKKGACCAGIDIHDARRVAEERGFPHYVLDYENIFKDAVIDEFADSYLAGATPVPCIRCNERVKFKDLLETARDLEADCMATGHYIQRKMGPNGPELHCAEDANRDQSYFLFSTTPEQLDYLRFPLGHLPSKDATREMAAQYGLAVADKPDSQDICFVPNGNYASVIEKLRPGAAEPGEIVHADGRVLGSHEGVIHYTIGQRRGLGIGGLSEPLYVVRLDVDRKQVVVGPKELLATRTIPVREINWLGDAPFTSRPEWHLSVKVRSTRPPREAIVRPISETEAEVELLTPEEGVSPGQACVFYESDGSRIFGGGWIWRGY</sequence>
<keyword id="KW-0067">ATP-binding</keyword>
<keyword id="KW-0963">Cytoplasm</keyword>
<keyword id="KW-1015">Disulfide bond</keyword>
<keyword id="KW-0547">Nucleotide-binding</keyword>
<keyword id="KW-1185">Reference proteome</keyword>
<keyword id="KW-0694">RNA-binding</keyword>
<keyword id="KW-0808">Transferase</keyword>
<keyword id="KW-0819">tRNA processing</keyword>
<keyword id="KW-0820">tRNA-binding</keyword>
<gene>
    <name evidence="1" type="primary">mnmA</name>
    <name type="synonym">trmU</name>
    <name type="ordered locus">SPO1677</name>
</gene>
<dbReference type="EC" id="2.8.1.13" evidence="1"/>
<dbReference type="EMBL" id="CP000031">
    <property type="protein sequence ID" value="AAV94962.1"/>
    <property type="molecule type" value="Genomic_DNA"/>
</dbReference>
<dbReference type="SMR" id="Q5LST9"/>
<dbReference type="STRING" id="246200.SPO1677"/>
<dbReference type="PaxDb" id="246200-SPO1677"/>
<dbReference type="KEGG" id="sil:SPO1677"/>
<dbReference type="eggNOG" id="COG0482">
    <property type="taxonomic scope" value="Bacteria"/>
</dbReference>
<dbReference type="HOGENOM" id="CLU_035188_0_1_5"/>
<dbReference type="Proteomes" id="UP000001023">
    <property type="component" value="Chromosome"/>
</dbReference>
<dbReference type="GO" id="GO:0005737">
    <property type="term" value="C:cytoplasm"/>
    <property type="evidence" value="ECO:0007669"/>
    <property type="project" value="UniProtKB-SubCell"/>
</dbReference>
<dbReference type="GO" id="GO:0005524">
    <property type="term" value="F:ATP binding"/>
    <property type="evidence" value="ECO:0007669"/>
    <property type="project" value="UniProtKB-KW"/>
</dbReference>
<dbReference type="GO" id="GO:0000049">
    <property type="term" value="F:tRNA binding"/>
    <property type="evidence" value="ECO:0007669"/>
    <property type="project" value="UniProtKB-KW"/>
</dbReference>
<dbReference type="GO" id="GO:0103016">
    <property type="term" value="F:tRNA-uridine 2-sulfurtransferase activity"/>
    <property type="evidence" value="ECO:0007669"/>
    <property type="project" value="UniProtKB-EC"/>
</dbReference>
<dbReference type="GO" id="GO:0002143">
    <property type="term" value="P:tRNA wobble position uridine thiolation"/>
    <property type="evidence" value="ECO:0007669"/>
    <property type="project" value="TreeGrafter"/>
</dbReference>
<dbReference type="CDD" id="cd01998">
    <property type="entry name" value="MnmA_TRMU-like"/>
    <property type="match status" value="1"/>
</dbReference>
<dbReference type="FunFam" id="2.30.30.280:FF:000001">
    <property type="entry name" value="tRNA-specific 2-thiouridylase MnmA"/>
    <property type="match status" value="1"/>
</dbReference>
<dbReference type="FunFam" id="3.40.50.620:FF:000115">
    <property type="entry name" value="tRNA-specific 2-thiouridylase MnmA"/>
    <property type="match status" value="1"/>
</dbReference>
<dbReference type="Gene3D" id="2.30.30.280">
    <property type="entry name" value="Adenine nucleotide alpha hydrolases-like domains"/>
    <property type="match status" value="1"/>
</dbReference>
<dbReference type="Gene3D" id="3.40.50.620">
    <property type="entry name" value="HUPs"/>
    <property type="match status" value="1"/>
</dbReference>
<dbReference type="Gene3D" id="2.40.30.10">
    <property type="entry name" value="Translation factors"/>
    <property type="match status" value="1"/>
</dbReference>
<dbReference type="HAMAP" id="MF_00144">
    <property type="entry name" value="tRNA_thiouridyl_MnmA"/>
    <property type="match status" value="1"/>
</dbReference>
<dbReference type="InterPro" id="IPR004506">
    <property type="entry name" value="MnmA-like"/>
</dbReference>
<dbReference type="InterPro" id="IPR046885">
    <property type="entry name" value="MnmA-like_C"/>
</dbReference>
<dbReference type="InterPro" id="IPR046884">
    <property type="entry name" value="MnmA-like_central"/>
</dbReference>
<dbReference type="InterPro" id="IPR023382">
    <property type="entry name" value="MnmA-like_central_sf"/>
</dbReference>
<dbReference type="InterPro" id="IPR014729">
    <property type="entry name" value="Rossmann-like_a/b/a_fold"/>
</dbReference>
<dbReference type="NCBIfam" id="NF001138">
    <property type="entry name" value="PRK00143.1"/>
    <property type="match status" value="1"/>
</dbReference>
<dbReference type="NCBIfam" id="TIGR00420">
    <property type="entry name" value="trmU"/>
    <property type="match status" value="1"/>
</dbReference>
<dbReference type="PANTHER" id="PTHR11933:SF5">
    <property type="entry name" value="MITOCHONDRIAL TRNA-SPECIFIC 2-THIOURIDYLASE 1"/>
    <property type="match status" value="1"/>
</dbReference>
<dbReference type="PANTHER" id="PTHR11933">
    <property type="entry name" value="TRNA 5-METHYLAMINOMETHYL-2-THIOURIDYLATE -METHYLTRANSFERASE"/>
    <property type="match status" value="1"/>
</dbReference>
<dbReference type="Pfam" id="PF03054">
    <property type="entry name" value="tRNA_Me_trans"/>
    <property type="match status" value="1"/>
</dbReference>
<dbReference type="Pfam" id="PF20258">
    <property type="entry name" value="tRNA_Me_trans_C"/>
    <property type="match status" value="1"/>
</dbReference>
<dbReference type="Pfam" id="PF20259">
    <property type="entry name" value="tRNA_Me_trans_M"/>
    <property type="match status" value="1"/>
</dbReference>
<dbReference type="SUPFAM" id="SSF52402">
    <property type="entry name" value="Adenine nucleotide alpha hydrolases-like"/>
    <property type="match status" value="1"/>
</dbReference>
<organism>
    <name type="scientific">Ruegeria pomeroyi (strain ATCC 700808 / DSM 15171 / DSS-3)</name>
    <name type="common">Silicibacter pomeroyi</name>
    <dbReference type="NCBI Taxonomy" id="246200"/>
    <lineage>
        <taxon>Bacteria</taxon>
        <taxon>Pseudomonadati</taxon>
        <taxon>Pseudomonadota</taxon>
        <taxon>Alphaproteobacteria</taxon>
        <taxon>Rhodobacterales</taxon>
        <taxon>Roseobacteraceae</taxon>
        <taxon>Ruegeria</taxon>
    </lineage>
</organism>
<protein>
    <recommendedName>
        <fullName evidence="1">tRNA-specific 2-thiouridylase MnmA</fullName>
        <ecNumber evidence="1">2.8.1.13</ecNumber>
    </recommendedName>
</protein>
<name>MNMA_RUEPO</name>